<dbReference type="EC" id="3.6.1.27" evidence="1"/>
<dbReference type="EMBL" id="AL935263">
    <property type="protein sequence ID" value="CCC80388.1"/>
    <property type="molecule type" value="Genomic_DNA"/>
</dbReference>
<dbReference type="RefSeq" id="WP_003645539.1">
    <property type="nucleotide sequence ID" value="NC_004567.2"/>
</dbReference>
<dbReference type="RefSeq" id="YP_004890902.1">
    <property type="nucleotide sequence ID" value="NC_004567.2"/>
</dbReference>
<dbReference type="SMR" id="Q88SK7"/>
<dbReference type="STRING" id="220668.lp_3407"/>
<dbReference type="EnsemblBacteria" id="CCC80388">
    <property type="protein sequence ID" value="CCC80388"/>
    <property type="gene ID" value="lp_3407"/>
</dbReference>
<dbReference type="KEGG" id="lpl:lp_3407"/>
<dbReference type="PATRIC" id="fig|220668.9.peg.2837"/>
<dbReference type="eggNOG" id="COG1968">
    <property type="taxonomic scope" value="Bacteria"/>
</dbReference>
<dbReference type="HOGENOM" id="CLU_060296_2_0_9"/>
<dbReference type="OrthoDB" id="9808289at2"/>
<dbReference type="PhylomeDB" id="Q88SK7"/>
<dbReference type="Proteomes" id="UP000000432">
    <property type="component" value="Chromosome"/>
</dbReference>
<dbReference type="GO" id="GO:0005886">
    <property type="term" value="C:plasma membrane"/>
    <property type="evidence" value="ECO:0007669"/>
    <property type="project" value="UniProtKB-SubCell"/>
</dbReference>
<dbReference type="GO" id="GO:0050380">
    <property type="term" value="F:undecaprenyl-diphosphatase activity"/>
    <property type="evidence" value="ECO:0007669"/>
    <property type="project" value="UniProtKB-UniRule"/>
</dbReference>
<dbReference type="GO" id="GO:0071555">
    <property type="term" value="P:cell wall organization"/>
    <property type="evidence" value="ECO:0007669"/>
    <property type="project" value="UniProtKB-KW"/>
</dbReference>
<dbReference type="GO" id="GO:0009252">
    <property type="term" value="P:peptidoglycan biosynthetic process"/>
    <property type="evidence" value="ECO:0007669"/>
    <property type="project" value="UniProtKB-KW"/>
</dbReference>
<dbReference type="GO" id="GO:0008360">
    <property type="term" value="P:regulation of cell shape"/>
    <property type="evidence" value="ECO:0007669"/>
    <property type="project" value="UniProtKB-KW"/>
</dbReference>
<dbReference type="GO" id="GO:0046677">
    <property type="term" value="P:response to antibiotic"/>
    <property type="evidence" value="ECO:0007669"/>
    <property type="project" value="UniProtKB-UniRule"/>
</dbReference>
<dbReference type="HAMAP" id="MF_01006">
    <property type="entry name" value="Undec_diphosphatase"/>
    <property type="match status" value="1"/>
</dbReference>
<dbReference type="InterPro" id="IPR003824">
    <property type="entry name" value="UppP"/>
</dbReference>
<dbReference type="NCBIfam" id="NF001389">
    <property type="entry name" value="PRK00281.1-2"/>
    <property type="match status" value="1"/>
</dbReference>
<dbReference type="NCBIfam" id="NF001390">
    <property type="entry name" value="PRK00281.1-4"/>
    <property type="match status" value="1"/>
</dbReference>
<dbReference type="NCBIfam" id="NF001391">
    <property type="entry name" value="PRK00281.1-5"/>
    <property type="match status" value="1"/>
</dbReference>
<dbReference type="NCBIfam" id="TIGR00753">
    <property type="entry name" value="undec_PP_bacA"/>
    <property type="match status" value="1"/>
</dbReference>
<dbReference type="PANTHER" id="PTHR30622">
    <property type="entry name" value="UNDECAPRENYL-DIPHOSPHATASE"/>
    <property type="match status" value="1"/>
</dbReference>
<dbReference type="PANTHER" id="PTHR30622:SF3">
    <property type="entry name" value="UNDECAPRENYL-DIPHOSPHATASE"/>
    <property type="match status" value="1"/>
</dbReference>
<dbReference type="Pfam" id="PF02673">
    <property type="entry name" value="BacA"/>
    <property type="match status" value="1"/>
</dbReference>
<feature type="chain" id="PRO_0000151159" description="Undecaprenyl-diphosphatase">
    <location>
        <begin position="1"/>
        <end position="275"/>
    </location>
</feature>
<feature type="transmembrane region" description="Helical" evidence="1">
    <location>
        <begin position="2"/>
        <end position="22"/>
    </location>
</feature>
<feature type="transmembrane region" description="Helical" evidence="1">
    <location>
        <begin position="43"/>
        <end position="63"/>
    </location>
</feature>
<feature type="transmembrane region" description="Helical" evidence="1">
    <location>
        <begin position="83"/>
        <end position="103"/>
    </location>
</feature>
<feature type="transmembrane region" description="Helical" evidence="1">
    <location>
        <begin position="111"/>
        <end position="131"/>
    </location>
</feature>
<feature type="transmembrane region" description="Helical" evidence="1">
    <location>
        <begin position="147"/>
        <end position="167"/>
    </location>
</feature>
<feature type="transmembrane region" description="Helical" evidence="1">
    <location>
        <begin position="186"/>
        <end position="206"/>
    </location>
</feature>
<feature type="transmembrane region" description="Helical" evidence="1">
    <location>
        <begin position="221"/>
        <end position="241"/>
    </location>
</feature>
<feature type="transmembrane region" description="Helical" evidence="1">
    <location>
        <begin position="255"/>
        <end position="275"/>
    </location>
</feature>
<organism>
    <name type="scientific">Lactiplantibacillus plantarum (strain ATCC BAA-793 / NCIMB 8826 / WCFS1)</name>
    <name type="common">Lactobacillus plantarum</name>
    <dbReference type="NCBI Taxonomy" id="220668"/>
    <lineage>
        <taxon>Bacteria</taxon>
        <taxon>Bacillati</taxon>
        <taxon>Bacillota</taxon>
        <taxon>Bacilli</taxon>
        <taxon>Lactobacillales</taxon>
        <taxon>Lactobacillaceae</taxon>
        <taxon>Lactiplantibacillus</taxon>
    </lineage>
</organism>
<evidence type="ECO:0000255" key="1">
    <source>
        <dbReference type="HAMAP-Rule" id="MF_01006"/>
    </source>
</evidence>
<sequence length="275" mass="30552">MLDIFKAVILGIVEGITEFLPISSTGHLVLVDEFIKMQQSTQFTDMFNVVIQLGAIMAVVVLYFHKLNPLSPRKDTTEKRNTWVLWSKVLLAVIPSVIVGLPLNDWMDEHLMNWAVVSATLIIYGVLFIVIENHNKRLTPRFANLQTLPYTTALFIGCFQLLSLIPGTSRSGATILGAILIGTSRYVATEFSFFMAIPTMFGASLLKLVKFFAHGGSLAGLQGAVLAVGVIVSFVVAYLSIRFLLDYIKKNDFKAFGWYRIVLGVLVIGYFTLIH</sequence>
<protein>
    <recommendedName>
        <fullName evidence="1">Undecaprenyl-diphosphatase</fullName>
        <ecNumber evidence="1">3.6.1.27</ecNumber>
    </recommendedName>
    <alternativeName>
        <fullName evidence="1">Bacitracin resistance protein</fullName>
    </alternativeName>
    <alternativeName>
        <fullName evidence="1">Undecaprenyl pyrophosphate phosphatase</fullName>
    </alternativeName>
</protein>
<keyword id="KW-0046">Antibiotic resistance</keyword>
<keyword id="KW-1003">Cell membrane</keyword>
<keyword id="KW-0133">Cell shape</keyword>
<keyword id="KW-0961">Cell wall biogenesis/degradation</keyword>
<keyword id="KW-0378">Hydrolase</keyword>
<keyword id="KW-0472">Membrane</keyword>
<keyword id="KW-0573">Peptidoglycan synthesis</keyword>
<keyword id="KW-1185">Reference proteome</keyword>
<keyword id="KW-0812">Transmembrane</keyword>
<keyword id="KW-1133">Transmembrane helix</keyword>
<proteinExistence type="inferred from homology"/>
<gene>
    <name evidence="1" type="primary">uppP</name>
    <name type="synonym">bacA</name>
    <name type="synonym">upk</name>
    <name type="ordered locus">lp_3407</name>
</gene>
<comment type="function">
    <text evidence="1">Catalyzes the dephosphorylation of undecaprenyl diphosphate (UPP). Confers resistance to bacitracin.</text>
</comment>
<comment type="catalytic activity">
    <reaction evidence="1">
        <text>di-trans,octa-cis-undecaprenyl diphosphate + H2O = di-trans,octa-cis-undecaprenyl phosphate + phosphate + H(+)</text>
        <dbReference type="Rhea" id="RHEA:28094"/>
        <dbReference type="ChEBI" id="CHEBI:15377"/>
        <dbReference type="ChEBI" id="CHEBI:15378"/>
        <dbReference type="ChEBI" id="CHEBI:43474"/>
        <dbReference type="ChEBI" id="CHEBI:58405"/>
        <dbReference type="ChEBI" id="CHEBI:60392"/>
        <dbReference type="EC" id="3.6.1.27"/>
    </reaction>
</comment>
<comment type="subcellular location">
    <subcellularLocation>
        <location evidence="1">Cell membrane</location>
        <topology evidence="1">Multi-pass membrane protein</topology>
    </subcellularLocation>
</comment>
<comment type="miscellaneous">
    <text>Bacitracin is thought to be involved in the inhibition of peptidoglycan synthesis by sequestering undecaprenyl diphosphate, thereby reducing the pool of lipid carrier available.</text>
</comment>
<comment type="similarity">
    <text evidence="1">Belongs to the UppP family.</text>
</comment>
<name>UPPP_LACPL</name>
<reference key="1">
    <citation type="journal article" date="2003" name="Proc. Natl. Acad. Sci. U.S.A.">
        <title>Complete genome sequence of Lactobacillus plantarum WCFS1.</title>
        <authorList>
            <person name="Kleerebezem M."/>
            <person name="Boekhorst J."/>
            <person name="van Kranenburg R."/>
            <person name="Molenaar D."/>
            <person name="Kuipers O.P."/>
            <person name="Leer R."/>
            <person name="Tarchini R."/>
            <person name="Peters S.A."/>
            <person name="Sandbrink H.M."/>
            <person name="Fiers M.W.E.J."/>
            <person name="Stiekema W."/>
            <person name="Klein Lankhorst R.M."/>
            <person name="Bron P.A."/>
            <person name="Hoffer S.M."/>
            <person name="Nierop Groot M.N."/>
            <person name="Kerkhoven R."/>
            <person name="De Vries M."/>
            <person name="Ursing B."/>
            <person name="De Vos W.M."/>
            <person name="Siezen R.J."/>
        </authorList>
    </citation>
    <scope>NUCLEOTIDE SEQUENCE [LARGE SCALE GENOMIC DNA]</scope>
    <source>
        <strain>ATCC BAA-793 / NCIMB 8826 / WCFS1</strain>
    </source>
</reference>
<reference key="2">
    <citation type="journal article" date="2012" name="J. Bacteriol.">
        <title>Complete resequencing and reannotation of the Lactobacillus plantarum WCFS1 genome.</title>
        <authorList>
            <person name="Siezen R.J."/>
            <person name="Francke C."/>
            <person name="Renckens B."/>
            <person name="Boekhorst J."/>
            <person name="Wels M."/>
            <person name="Kleerebezem M."/>
            <person name="van Hijum S.A."/>
        </authorList>
    </citation>
    <scope>NUCLEOTIDE SEQUENCE [LARGE SCALE GENOMIC DNA]</scope>
    <scope>GENOME REANNOTATION</scope>
    <source>
        <strain>ATCC BAA-793 / NCIMB 8826 / WCFS1</strain>
    </source>
</reference>
<accession>Q88SK7</accession>
<accession>F9UU86</accession>